<keyword id="KW-0223">Dioxygenase</keyword>
<keyword id="KW-0349">Heme</keyword>
<keyword id="KW-0408">Iron</keyword>
<keyword id="KW-0479">Metal-binding</keyword>
<keyword id="KW-0560">Oxidoreductase</keyword>
<feature type="chain" id="PRO_0000461412" description="6-hydroxytryptophan 2,3-dioxygenase fscD">
    <location>
        <begin position="1"/>
        <end position="404"/>
    </location>
</feature>
<feature type="binding site" description="proximal binding residue" evidence="1">
    <location>
        <position position="341"/>
    </location>
    <ligand>
        <name>heme b</name>
        <dbReference type="ChEBI" id="CHEBI:60344"/>
    </ligand>
    <ligandPart>
        <name>Fe</name>
        <dbReference type="ChEBI" id="CHEBI:18248"/>
    </ligandPart>
</feature>
<reference key="1">
    <citation type="journal article" date="2021" name="Org. Biomol. Chem.">
        <title>Fusarochromene, a novel tryptophan-derived metabolite from Fusarium sacchari.</title>
        <authorList>
            <person name="Marshall J.W."/>
            <person name="de Mattos-Shipley K.M.J."/>
            <person name="Ghannam I.A.Y."/>
            <person name="Munawar A."/>
            <person name="Killen J.C."/>
            <person name="Lazarus C.M."/>
            <person name="Cox R.J."/>
            <person name="Willis C.L."/>
            <person name="Simpson T.J."/>
        </authorList>
    </citation>
    <scope>NUCLEOTIDE SEQUENCE [GENOMIC DNA]</scope>
    <scope>FUNCTION</scope>
    <scope>PATHWAY</scope>
</reference>
<comment type="function">
    <text evidence="2 5">6-hydroxytryptophan 2,3-dioxygenase; part of the fragmented gene cluster that mediates the biosynthesis of fusarochromene, a tryptophan-derived metabolite closely related to a group of mycotoxins including fusarochromanone (PubMed:33107888). Within the pathway, fscD is responsible of the cleavage of the pyrrole ring of 6-hydroxytryptophan (Probable). The first step of the pathway is the epimerization of L-tryptophan to D-tryptophan in the presence of the NRPS-like tryptophan epimerase fscC. D-tryptophan is subsequently hydroxylated by the tryptophan 6-hydroxylase fscE to yield 6-hydroxytryptophan. The pyrrole ring undergoes cleavaged by the tryptophan 2,3-dioxygenase fscD and is finally converted to 4-hydroxykyrunenine by the hydrolase fscH. The NRPS-like oxidoreductase fscA reduces the carboxyl group to primary alcohol and the DMATS-type prenyltransferase fscG performs prenylation, followed by the formation of a chromene ring catalyzed by the oxidoreductase fscI, which leads to desacetylfusarochromene. Epoxidation by fscF and rearrangement reactions of chromene double bonds convert compound desacetylfusarochromene to fusarochromanones. Although specific acetyltransferases were not found near the fsc gene cluster, several predicted enzymes containing the N-acetyltransferase superfamily domain are present in the genome of F.equiseti. These predicted enzymes may have the potential to convert desacetylfusarochromene to fusarochromene (Probable).</text>
</comment>
<comment type="cofactor">
    <cofactor evidence="1">
        <name>heme</name>
        <dbReference type="ChEBI" id="CHEBI:30413"/>
    </cofactor>
    <text evidence="1">Binds 1 heme group per subunit.</text>
</comment>
<comment type="pathway">
    <text evidence="5">Secondary metabolite biosynthesis.</text>
</comment>
<comment type="similarity">
    <text evidence="4">Belongs to the indoleamine 2,3-dioxygenase family.</text>
</comment>
<accession>A0A823AAW6</accession>
<dbReference type="EC" id="1.13.-.-" evidence="5"/>
<dbReference type="EMBL" id="BK013344">
    <property type="protein sequence ID" value="DAD54577.1"/>
    <property type="molecule type" value="Genomic_DNA"/>
</dbReference>
<dbReference type="SMR" id="A0A823AAW6"/>
<dbReference type="GO" id="GO:0005737">
    <property type="term" value="C:cytoplasm"/>
    <property type="evidence" value="ECO:0007669"/>
    <property type="project" value="TreeGrafter"/>
</dbReference>
<dbReference type="GO" id="GO:0020037">
    <property type="term" value="F:heme binding"/>
    <property type="evidence" value="ECO:0007669"/>
    <property type="project" value="InterPro"/>
</dbReference>
<dbReference type="GO" id="GO:0033754">
    <property type="term" value="F:indoleamine 2,3-dioxygenase activity"/>
    <property type="evidence" value="ECO:0007669"/>
    <property type="project" value="TreeGrafter"/>
</dbReference>
<dbReference type="GO" id="GO:0046872">
    <property type="term" value="F:metal ion binding"/>
    <property type="evidence" value="ECO:0007669"/>
    <property type="project" value="UniProtKB-KW"/>
</dbReference>
<dbReference type="GO" id="GO:0034354">
    <property type="term" value="P:'de novo' NAD biosynthetic process from L-tryptophan"/>
    <property type="evidence" value="ECO:0007669"/>
    <property type="project" value="TreeGrafter"/>
</dbReference>
<dbReference type="GO" id="GO:0019441">
    <property type="term" value="P:L-tryptophan catabolic process to kynurenine"/>
    <property type="evidence" value="ECO:0007669"/>
    <property type="project" value="InterPro"/>
</dbReference>
<dbReference type="Gene3D" id="1.20.58.480">
    <property type="match status" value="1"/>
</dbReference>
<dbReference type="InterPro" id="IPR000898">
    <property type="entry name" value="Indolamine_dOase"/>
</dbReference>
<dbReference type="InterPro" id="IPR037217">
    <property type="entry name" value="Trp/Indoleamine_2_3_dOase-like"/>
</dbReference>
<dbReference type="PANTHER" id="PTHR28657">
    <property type="entry name" value="INDOLEAMINE 2,3-DIOXYGENASE"/>
    <property type="match status" value="1"/>
</dbReference>
<dbReference type="PANTHER" id="PTHR28657:SF5">
    <property type="entry name" value="INDOLEAMINE 2,3-DIOXYGENASE"/>
    <property type="match status" value="1"/>
</dbReference>
<dbReference type="Pfam" id="PF01231">
    <property type="entry name" value="IDO"/>
    <property type="match status" value="1"/>
</dbReference>
<dbReference type="SUPFAM" id="SSF140959">
    <property type="entry name" value="Indolic compounds 2,3-dioxygenase-like"/>
    <property type="match status" value="1"/>
</dbReference>
<sequence length="404" mass="44591">MDDLMTNIEHYHVSLTTGFLPPSAPLTHLPQKYYEPWETLASSLPTRIRDGSLRHQASLIPLLETDFLVTDAEWQRAYVVLGFLSNAFIFCQYPPSERLPLSLAEPMMNVSCYLGLPCVPTYSGQTLWNHCYISEIQLPVLEQVNTLVSFTGSREESAFFGISVAIEKCGSPLIRTLLHAMAAAEAGNEKELTACLSKAMITIDSITSILPQLYGRCSPSFFYNTLRPFLEGTQDLKSAGLPNGVFFETKNGGSYQKFRGPSNAQSSLFCFIDIALGIEHNDNSFLTEMRQYMPGPHRDFLARVEAIDSVRHFISANPDASQLQEAYEGCVLALARFRQIHIRLVARYIVIPSNGTKTADQSSMGNGLSSEPVSIAGAQGTGGTKPVEFLKVIRNDVLESLQAS</sequence>
<protein>
    <recommendedName>
        <fullName evidence="3">6-hydroxytryptophan 2,3-dioxygenase fscD</fullName>
        <ecNumber evidence="5">1.13.-.-</ecNumber>
    </recommendedName>
    <alternativeName>
        <fullName evidence="3">Fusarochromene biosynthesis cluster protein D</fullName>
    </alternativeName>
</protein>
<gene>
    <name evidence="3" type="primary">fscD</name>
</gene>
<proteinExistence type="inferred from homology"/>
<name>FSCD_FUSEQ</name>
<evidence type="ECO:0000250" key="1">
    <source>
        <dbReference type="UniProtKB" id="P14902"/>
    </source>
</evidence>
<evidence type="ECO:0000269" key="2">
    <source>
    </source>
</evidence>
<evidence type="ECO:0000303" key="3">
    <source>
    </source>
</evidence>
<evidence type="ECO:0000305" key="4"/>
<evidence type="ECO:0000305" key="5">
    <source>
    </source>
</evidence>
<organism>
    <name type="scientific">Fusarium equiseti</name>
    <name type="common">Fusarium scirpi</name>
    <dbReference type="NCBI Taxonomy" id="61235"/>
    <lineage>
        <taxon>Eukaryota</taxon>
        <taxon>Fungi</taxon>
        <taxon>Dikarya</taxon>
        <taxon>Ascomycota</taxon>
        <taxon>Pezizomycotina</taxon>
        <taxon>Sordariomycetes</taxon>
        <taxon>Hypocreomycetidae</taxon>
        <taxon>Hypocreales</taxon>
        <taxon>Nectriaceae</taxon>
        <taxon>Fusarium</taxon>
        <taxon>Fusarium incarnatum-equiseti species complex</taxon>
    </lineage>
</organism>